<sequence length="186" mass="19601">MTGPYFPQTIPFLPSYIPQDVDMTAVKAEVAALGVSAPPAATPGLLEVVQHARDEGIDLKIVLLDHNPPNDTPLRDIATVVGADYSDATVLVLSPNYVGSYSTQYPRVTLEAGEDHSKTGNPVQSAQNFVHELSTPEFPWSALTIVLLIGVLAAAVGARLMQLRGRRSATSTDAAPGAGDDLNQGV</sequence>
<protein>
    <recommendedName>
        <fullName evidence="4">Membrane protein Rv1476</fullName>
    </recommendedName>
</protein>
<reference key="1">
    <citation type="journal article" date="1998" name="Nature">
        <title>Deciphering the biology of Mycobacterium tuberculosis from the complete genome sequence.</title>
        <authorList>
            <person name="Cole S.T."/>
            <person name="Brosch R."/>
            <person name="Parkhill J."/>
            <person name="Garnier T."/>
            <person name="Churcher C.M."/>
            <person name="Harris D.E."/>
            <person name="Gordon S.V."/>
            <person name="Eiglmeier K."/>
            <person name="Gas S."/>
            <person name="Barry C.E. III"/>
            <person name="Tekaia F."/>
            <person name="Badcock K."/>
            <person name="Basham D."/>
            <person name="Brown D."/>
            <person name="Chillingworth T."/>
            <person name="Connor R."/>
            <person name="Davies R.M."/>
            <person name="Devlin K."/>
            <person name="Feltwell T."/>
            <person name="Gentles S."/>
            <person name="Hamlin N."/>
            <person name="Holroyd S."/>
            <person name="Hornsby T."/>
            <person name="Jagels K."/>
            <person name="Krogh A."/>
            <person name="McLean J."/>
            <person name="Moule S."/>
            <person name="Murphy L.D."/>
            <person name="Oliver S."/>
            <person name="Osborne J."/>
            <person name="Quail M.A."/>
            <person name="Rajandream M.A."/>
            <person name="Rogers J."/>
            <person name="Rutter S."/>
            <person name="Seeger K."/>
            <person name="Skelton S."/>
            <person name="Squares S."/>
            <person name="Squares R."/>
            <person name="Sulston J.E."/>
            <person name="Taylor K."/>
            <person name="Whitehead S."/>
            <person name="Barrell B.G."/>
        </authorList>
    </citation>
    <scope>NUCLEOTIDE SEQUENCE [LARGE SCALE GENOMIC DNA]</scope>
    <source>
        <strain>ATCC 25618 / H37Rv</strain>
    </source>
</reference>
<reference key="2">
    <citation type="journal article" date="2011" name="Mol. Cell. Proteomics">
        <title>Proteogenomic analysis of Mycobacterium tuberculosis by high resolution mass spectrometry.</title>
        <authorList>
            <person name="Kelkar D.S."/>
            <person name="Kumar D."/>
            <person name="Kumar P."/>
            <person name="Balakrishnan L."/>
            <person name="Muthusamy B."/>
            <person name="Yadav A.K."/>
            <person name="Shrivastava P."/>
            <person name="Marimuthu A."/>
            <person name="Anand S."/>
            <person name="Sundaram H."/>
            <person name="Kingsbury R."/>
            <person name="Harsha H.C."/>
            <person name="Nair B."/>
            <person name="Prasad T.S."/>
            <person name="Chauhan D.S."/>
            <person name="Katoch K."/>
            <person name="Katoch V.M."/>
            <person name="Kumar P."/>
            <person name="Chaerkady R."/>
            <person name="Ramachandran S."/>
            <person name="Dash D."/>
            <person name="Pandey A."/>
        </authorList>
    </citation>
    <scope>IDENTIFICATION BY MASS SPECTROMETRY [LARGE SCALE ANALYSIS]</scope>
    <source>
        <strain>ATCC 25618 / H37Rv</strain>
    </source>
</reference>
<reference key="3">
    <citation type="journal article" date="2024" name="Curr. Issues Mol. Biol.">
        <title>The Role of Rv1476 in Regulating Stress Response and Intracellular Survival of Mycobacterium tuberculosis.</title>
        <authorList>
            <person name="Reheman A."/>
            <person name="Wang Y."/>
            <person name="Cai H."/>
            <person name="Wei P."/>
            <person name="Cao G."/>
            <person name="Chen X."/>
        </authorList>
    </citation>
    <scope>PROBABLE FUNCTION IN VIRULENCE</scope>
    <scope>OVEREXPRESSION</scope>
    <source>
        <strain>H37Ra</strain>
    </source>
</reference>
<gene>
    <name evidence="5" type="ordered locus">Rv1476</name>
</gene>
<feature type="chain" id="PRO_0000461196" description="Membrane protein Rv1476">
    <location>
        <begin position="1"/>
        <end position="186"/>
    </location>
</feature>
<feature type="transmembrane region" description="Helical" evidence="1">
    <location>
        <begin position="138"/>
        <end position="158"/>
    </location>
</feature>
<feature type="region of interest" description="Disordered" evidence="2">
    <location>
        <begin position="166"/>
        <end position="186"/>
    </location>
</feature>
<keyword id="KW-0472">Membrane</keyword>
<keyword id="KW-1185">Reference proteome</keyword>
<keyword id="KW-0812">Transmembrane</keyword>
<keyword id="KW-1133">Transmembrane helix</keyword>
<organism>
    <name type="scientific">Mycobacterium tuberculosis (strain ATCC 25618 / H37Rv)</name>
    <dbReference type="NCBI Taxonomy" id="83332"/>
    <lineage>
        <taxon>Bacteria</taxon>
        <taxon>Bacillati</taxon>
        <taxon>Actinomycetota</taxon>
        <taxon>Actinomycetes</taxon>
        <taxon>Mycobacteriales</taxon>
        <taxon>Mycobacteriaceae</taxon>
        <taxon>Mycobacterium</taxon>
        <taxon>Mycobacterium tuberculosis complex</taxon>
    </lineage>
</organism>
<comment type="function">
    <text evidence="3">May affect the expression of genes linked to host macrophage apoptosis and immune response, thereby promoting the survival of M.tuberculosis in host macrophages (PubMed:38392218). Overexpression of the gene increases susceptibility of the bacteria to various stresses, but promotes intracellular survival in host macrophages (PubMed:38392218). It has no impact on the growth rate in vitro (PubMed:38392218). Overexpression causes changes in the transcriptome of THP-1 cells, including expression of genes involved in cell proliferation, fatty acid degradation, cytokine-cytokine receptor interaction and immune response pathways (PubMed:38392218).</text>
</comment>
<comment type="subcellular location">
    <subcellularLocation>
        <location evidence="1">Membrane</location>
        <topology evidence="1">Single-pass membrane protein</topology>
    </subcellularLocation>
</comment>
<accession>O53167</accession>
<accession>F2GES3</accession>
<accession>I6XBK3</accession>
<accession>Q7D8D7</accession>
<dbReference type="EMBL" id="AL123456">
    <property type="protein sequence ID" value="CCP44236.1"/>
    <property type="molecule type" value="Genomic_DNA"/>
</dbReference>
<dbReference type="RefSeq" id="NP_215992.1">
    <property type="nucleotide sequence ID" value="NC_000962.3"/>
</dbReference>
<dbReference type="RefSeq" id="WP_003407520.1">
    <property type="nucleotide sequence ID" value="NZ_NVQJ01000004.1"/>
</dbReference>
<dbReference type="STRING" id="83332.Rv1476"/>
<dbReference type="PaxDb" id="83332-Rv1476"/>
<dbReference type="DNASU" id="886539"/>
<dbReference type="GeneID" id="886539"/>
<dbReference type="KEGG" id="mtu:Rv1476"/>
<dbReference type="KEGG" id="mtv:RVBD_1476"/>
<dbReference type="PATRIC" id="fig|83332.111.peg.1643"/>
<dbReference type="TubercuList" id="Rv1476"/>
<dbReference type="eggNOG" id="ENOG5033UJA">
    <property type="taxonomic scope" value="Bacteria"/>
</dbReference>
<dbReference type="InParanoid" id="O53167"/>
<dbReference type="OrthoDB" id="4543462at2"/>
<dbReference type="Proteomes" id="UP000001584">
    <property type="component" value="Chromosome"/>
</dbReference>
<dbReference type="GO" id="GO:0005886">
    <property type="term" value="C:plasma membrane"/>
    <property type="evidence" value="ECO:0007005"/>
    <property type="project" value="MTBBASE"/>
</dbReference>
<dbReference type="InterPro" id="IPR046498">
    <property type="entry name" value="Rv1476-like"/>
</dbReference>
<dbReference type="Pfam" id="PF20381">
    <property type="entry name" value="Rv1476"/>
    <property type="match status" value="1"/>
</dbReference>
<evidence type="ECO:0000255" key="1"/>
<evidence type="ECO:0000256" key="2">
    <source>
        <dbReference type="SAM" id="MobiDB-lite"/>
    </source>
</evidence>
<evidence type="ECO:0000269" key="3">
    <source>
    </source>
</evidence>
<evidence type="ECO:0000305" key="4"/>
<evidence type="ECO:0000312" key="5">
    <source>
        <dbReference type="EMBL" id="CCP44236.1"/>
    </source>
</evidence>
<name>M1476_MYCTU</name>
<proteinExistence type="evidence at protein level"/>